<dbReference type="EC" id="3.1.-.-" evidence="6"/>
<dbReference type="EMBL" id="LC371755">
    <property type="protein sequence ID" value="BBC83965.1"/>
    <property type="molecule type" value="Genomic_DNA"/>
</dbReference>
<dbReference type="SMR" id="A0A348AXY2"/>
<dbReference type="ESTHER" id="curcl-tr09">
    <property type="family name" value="Thioesterase"/>
</dbReference>
<dbReference type="VEuPathDB" id="FungiDB:yc1106_06624"/>
<dbReference type="GO" id="GO:0016787">
    <property type="term" value="F:hydrolase activity"/>
    <property type="evidence" value="ECO:0007669"/>
    <property type="project" value="UniProtKB-KW"/>
</dbReference>
<dbReference type="GO" id="GO:0017000">
    <property type="term" value="P:antibiotic biosynthetic process"/>
    <property type="evidence" value="ECO:0007669"/>
    <property type="project" value="UniProtKB-KW"/>
</dbReference>
<dbReference type="Gene3D" id="3.40.50.1820">
    <property type="entry name" value="alpha/beta hydrolase"/>
    <property type="match status" value="1"/>
</dbReference>
<dbReference type="InterPro" id="IPR029058">
    <property type="entry name" value="AB_hydrolase_fold"/>
</dbReference>
<dbReference type="InterPro" id="IPR001031">
    <property type="entry name" value="Thioesterase"/>
</dbReference>
<dbReference type="Pfam" id="PF00975">
    <property type="entry name" value="Thioesterase"/>
    <property type="match status" value="1"/>
</dbReference>
<dbReference type="SUPFAM" id="SSF53474">
    <property type="entry name" value="alpha/beta-Hydrolases"/>
    <property type="match status" value="1"/>
</dbReference>
<accession>A0A348AXY2</accession>
<organism>
    <name type="scientific">Curvularia clavata</name>
    <dbReference type="NCBI Taxonomy" id="95742"/>
    <lineage>
        <taxon>Eukaryota</taxon>
        <taxon>Fungi</taxon>
        <taxon>Dikarya</taxon>
        <taxon>Ascomycota</taxon>
        <taxon>Pezizomycotina</taxon>
        <taxon>Dothideomycetes</taxon>
        <taxon>Pleosporomycetidae</taxon>
        <taxon>Pleosporales</taxon>
        <taxon>Pleosporineae</taxon>
        <taxon>Pleosporaceae</taxon>
        <taxon>Curvularia</taxon>
    </lineage>
</organism>
<sequence>MESEDNPLRIQTGSLCSFQRPTPLVLIHDSSGTTFSYFRLGSLNRDVWAIHDPHFDKSTPWKGGFGEIAEHYIKLIETAGIRGSILLGGWSLGGYLALTIAHKLTAITNPTFSVTGILLVDSPYHTPMSKLPPHAPDPNFQHLPELVRKSFENYDVLLDRWELPPWTAPALEGKTIRCSAGGKTFTVANGRILYKPLGKGWEDVKMQSFEHGTSTLERYIELPPAALIRCAQAIPTDTDSKMPCFVDRFRHETLLGWDSNFPSFIKAAVDTNTHHFNIFESQNLKRLTIQLNECLEVLDSCCPMGYC</sequence>
<protein>
    <recommendedName>
        <fullName evidence="4">Probable thioesterase KK1J</fullName>
        <ecNumber evidence="6">3.1.-.-</ecNumber>
    </recommendedName>
    <alternativeName>
        <fullName evidence="4">KK-1 biosynthesis cluster protein J</fullName>
    </alternativeName>
</protein>
<name>KK1J_CURCL</name>
<comment type="function">
    <text evidence="1 2 6">Probable thioesterase; part of the gene cluster that mediates the biosynthesis of KK-1, a novel cyclic depsipeptide with 10 residues which is a promising active compound with high activity against many plant pathogens, especially Botrytis cinerea (PubMed:29686660, PubMed:37746209). Within the pathway, kk1J is not essential for the biosynthesis of KK-1, but plays a role for efficient production via correction of peptide chain synthesis by kk1B (Probable). The nonribosomal peptide synthetase (NRPS) kk1B catalyzes the elongation and cyclization of the decapeptide chain composed of 1 D-lactic acid residue (D-Lac), 1 pipecolic acid residue (Pip), 1 aspartic acid residue (Asp), 1 isoleucine residue (Ile), 1 glycine residue (Gly), 1 tyrosine residue (Tyr) and 4 valine residues (Val). The Asp, Ile and 3 Val residues are N-methylated by the 5 methyltransferase domains from the NRPS (found in modules 3, 5, 6, 7 and 9), whereas the Tyr residue is O-methylated by the cluster encoded O-methyltransferase kk1A. The thioesterase kk1J is likely to be involved in the corrective mechanism of peptide chain synthesis. The D-lactate dehydrogenase kk1H is involved in the synthesis of D-lactic acid from pyruvic acid, which is recognized by the A domain of the first kk1B module. The pyrroline-5-carboxylate reductase kk1I is involved in the synthesis of the L-pipecolic acid residue of KK-1 from delta-1-pyrroline-5-carboxylate (P5C), a metabolic intermediate of lysine. It still is unclear how kk1C and kk1D are involved in the production of KK-1 (Probable).</text>
</comment>
<comment type="pathway">
    <text evidence="1 2">Secondary metabolite biosynthesis.</text>
</comment>
<comment type="induction">
    <text evidence="2">Expression is positively regulated by the KK-1 cluster-specific transcription factor kk1F.</text>
</comment>
<comment type="disruption phenotype">
    <text evidence="2">Decreases significantly the production of KK-1.</text>
</comment>
<comment type="similarity">
    <text evidence="5">Belongs to the AMT4 thioesterase family.</text>
</comment>
<feature type="chain" id="PRO_0000450438" description="Probable thioesterase KK1J">
    <location>
        <begin position="1"/>
        <end position="307"/>
    </location>
</feature>
<reference key="1">
    <citation type="journal article" date="2018" name="Front. Microbiol.">
        <title>Heterologous production of a novel cyclic peptide compound, KK-1, in Aspergillus oryzae.</title>
        <authorList>
            <person name="Yoshimi A."/>
            <person name="Yamaguchi S."/>
            <person name="Fujioka T."/>
            <person name="Kawai K."/>
            <person name="Gomi K."/>
            <person name="Machida M."/>
            <person name="Abe K."/>
        </authorList>
    </citation>
    <scope>NUCLEOTIDE SEQUENCE [GENOMIC DNA]</scope>
    <scope>FUNCTION</scope>
    <scope>PATHWAY</scope>
    <source>
        <strain>BAUA-2787</strain>
    </source>
</reference>
<reference key="2">
    <citation type="journal article" date="2022" name="Front. Fungal Biol.">
        <title>Discovery of a gene cluster for the biosynthesis of novel cyclic peptide compound, KK-1, in Curvularia clavata.</title>
        <authorList>
            <person name="Yamaguchi S."/>
            <person name="Fujioka T."/>
            <person name="Yoshimi A."/>
            <person name="Kumagai T."/>
            <person name="Umemura M."/>
            <person name="Abe K."/>
            <person name="Machida M."/>
            <person name="Kawai K."/>
        </authorList>
    </citation>
    <scope>FUNCTION</scope>
    <scope>INDUCTION</scope>
    <scope>DISRUPTION PHENOTYPE</scope>
    <scope>PATHWAY</scope>
</reference>
<evidence type="ECO:0000269" key="1">
    <source>
    </source>
</evidence>
<evidence type="ECO:0000269" key="2">
    <source>
    </source>
</evidence>
<evidence type="ECO:0000303" key="3">
    <source>
    </source>
</evidence>
<evidence type="ECO:0000303" key="4">
    <source>
    </source>
</evidence>
<evidence type="ECO:0000305" key="5"/>
<evidence type="ECO:0000305" key="6">
    <source>
    </source>
</evidence>
<gene>
    <name evidence="4" type="primary">kk1J</name>
    <name evidence="3" type="synonym">TR09</name>
    <name type="ORF">TRAF135009</name>
</gene>
<proteinExistence type="evidence at transcript level"/>
<keyword id="KW-0045">Antibiotic biosynthesis</keyword>
<keyword id="KW-0378">Hydrolase</keyword>